<evidence type="ECO:0000250" key="1">
    <source>
        <dbReference type="UniProtKB" id="P37735"/>
    </source>
</evidence>
<evidence type="ECO:0000255" key="2"/>
<evidence type="ECO:0000269" key="3">
    <source>
    </source>
</evidence>
<evidence type="ECO:0000305" key="4"/>
<evidence type="ECO:0000312" key="5">
    <source>
        <dbReference type="EMBL" id="EAP79685.1"/>
    </source>
</evidence>
<evidence type="ECO:0007744" key="6">
    <source>
        <dbReference type="PDB" id="4NX1"/>
    </source>
</evidence>
<evidence type="ECO:0007744" key="7">
    <source>
        <dbReference type="PDB" id="4OVP"/>
    </source>
</evidence>
<evidence type="ECO:0007829" key="8">
    <source>
        <dbReference type="PDB" id="4NX1"/>
    </source>
</evidence>
<comment type="function">
    <text evidence="3 4">Solute-binding protein that binds D-mannuronate and D-taluronate (in vitro) (PubMed:25540822). Probably part of a tripartite ATP-independent periplasmic (TRAP) transport system that mediates solute transport into the cytoplasm.</text>
</comment>
<comment type="subunit">
    <text evidence="1">The complex is comprised of an extracytoplasmic solute-binding protein and a heteromeric permease formed by two transmembrane proteins.</text>
</comment>
<comment type="subcellular location">
    <subcellularLocation>
        <location evidence="1">Periplasm</location>
    </subcellularLocation>
</comment>
<comment type="similarity">
    <text evidence="4">Belongs to the bacterial solute-binding protein 7 family.</text>
</comment>
<feature type="signal peptide" evidence="2">
    <location>
        <begin position="1"/>
        <end position="27"/>
    </location>
</feature>
<feature type="chain" id="PRO_5002659887" description="Solute-binding protein NAS141_03721" evidence="2">
    <location>
        <begin position="28"/>
        <end position="330"/>
    </location>
</feature>
<feature type="binding site" evidence="3 7">
    <location>
        <position position="75"/>
    </location>
    <ligand>
        <name>alpha-D-mannuronate</name>
        <dbReference type="ChEBI" id="CHEBI:157625"/>
    </ligand>
</feature>
<feature type="binding site" evidence="3 6">
    <location>
        <position position="75"/>
    </location>
    <ligand>
        <name>alpha-D-taluronate</name>
        <dbReference type="ChEBI" id="CHEBI:157627"/>
    </ligand>
</feature>
<feature type="binding site" evidence="3 7">
    <location>
        <position position="97"/>
    </location>
    <ligand>
        <name>alpha-D-mannuronate</name>
        <dbReference type="ChEBI" id="CHEBI:157625"/>
    </ligand>
</feature>
<feature type="binding site" evidence="3 6">
    <location>
        <position position="97"/>
    </location>
    <ligand>
        <name>alpha-D-taluronate</name>
        <dbReference type="ChEBI" id="CHEBI:157627"/>
    </ligand>
</feature>
<feature type="binding site" evidence="3 7">
    <location>
        <position position="153"/>
    </location>
    <ligand>
        <name>alpha-D-mannuronate</name>
        <dbReference type="ChEBI" id="CHEBI:157625"/>
    </ligand>
</feature>
<feature type="binding site" evidence="3 6">
    <location>
        <position position="153"/>
    </location>
    <ligand>
        <name>alpha-D-taluronate</name>
        <dbReference type="ChEBI" id="CHEBI:157627"/>
    </ligand>
</feature>
<feature type="binding site" evidence="3 7">
    <location>
        <position position="173"/>
    </location>
    <ligand>
        <name>alpha-D-mannuronate</name>
        <dbReference type="ChEBI" id="CHEBI:157625"/>
    </ligand>
</feature>
<feature type="binding site" evidence="3 6">
    <location>
        <position position="173"/>
    </location>
    <ligand>
        <name>alpha-D-taluronate</name>
        <dbReference type="ChEBI" id="CHEBI:157627"/>
    </ligand>
</feature>
<feature type="binding site" evidence="3 7">
    <location>
        <position position="196"/>
    </location>
    <ligand>
        <name>alpha-D-mannuronate</name>
        <dbReference type="ChEBI" id="CHEBI:157625"/>
    </ligand>
</feature>
<feature type="binding site" evidence="3 6">
    <location>
        <position position="196"/>
    </location>
    <ligand>
        <name>alpha-D-taluronate</name>
        <dbReference type="ChEBI" id="CHEBI:157627"/>
    </ligand>
</feature>
<feature type="binding site" evidence="3 7">
    <location>
        <begin position="213"/>
        <end position="214"/>
    </location>
    <ligand>
        <name>alpha-D-mannuronate</name>
        <dbReference type="ChEBI" id="CHEBI:157625"/>
    </ligand>
</feature>
<feature type="binding site" evidence="3 6">
    <location>
        <begin position="213"/>
        <end position="214"/>
    </location>
    <ligand>
        <name>alpha-D-taluronate</name>
        <dbReference type="ChEBI" id="CHEBI:157627"/>
    </ligand>
</feature>
<feature type="binding site" evidence="3 7">
    <location>
        <position position="240"/>
    </location>
    <ligand>
        <name>alpha-D-mannuronate</name>
        <dbReference type="ChEBI" id="CHEBI:157625"/>
    </ligand>
</feature>
<feature type="binding site" evidence="3 6">
    <location>
        <position position="240"/>
    </location>
    <ligand>
        <name>alpha-D-taluronate</name>
        <dbReference type="ChEBI" id="CHEBI:157627"/>
    </ligand>
</feature>
<feature type="strand" evidence="8">
    <location>
        <begin position="28"/>
        <end position="34"/>
    </location>
</feature>
<feature type="helix" evidence="8">
    <location>
        <begin position="42"/>
        <end position="57"/>
    </location>
</feature>
<feature type="strand" evidence="8">
    <location>
        <begin position="62"/>
        <end position="67"/>
    </location>
</feature>
<feature type="turn" evidence="8">
    <location>
        <begin position="69"/>
        <end position="72"/>
    </location>
</feature>
<feature type="helix" evidence="8">
    <location>
        <begin position="75"/>
        <end position="84"/>
    </location>
</feature>
<feature type="strand" evidence="8">
    <location>
        <begin position="89"/>
        <end position="92"/>
    </location>
</feature>
<feature type="helix" evidence="8">
    <location>
        <begin position="95"/>
        <end position="97"/>
    </location>
</feature>
<feature type="turn" evidence="8">
    <location>
        <begin position="99"/>
        <end position="101"/>
    </location>
</feature>
<feature type="helix" evidence="8">
    <location>
        <begin position="105"/>
        <end position="109"/>
    </location>
</feature>
<feature type="helix" evidence="8">
    <location>
        <begin position="117"/>
        <end position="124"/>
    </location>
</feature>
<feature type="helix" evidence="8">
    <location>
        <begin position="130"/>
        <end position="140"/>
    </location>
</feature>
<feature type="strand" evidence="8">
    <location>
        <begin position="142"/>
        <end position="159"/>
    </location>
</feature>
<feature type="helix" evidence="8">
    <location>
        <begin position="164"/>
        <end position="167"/>
    </location>
</feature>
<feature type="strand" evidence="8">
    <location>
        <begin position="171"/>
        <end position="173"/>
    </location>
</feature>
<feature type="helix" evidence="8">
    <location>
        <begin position="178"/>
        <end position="186"/>
    </location>
</feature>
<feature type="strand" evidence="8">
    <location>
        <begin position="190"/>
        <end position="192"/>
    </location>
</feature>
<feature type="helix" evidence="8">
    <location>
        <begin position="196"/>
        <end position="198"/>
    </location>
</feature>
<feature type="helix" evidence="8">
    <location>
        <begin position="199"/>
        <end position="204"/>
    </location>
</feature>
<feature type="strand" evidence="8">
    <location>
        <begin position="209"/>
        <end position="213"/>
    </location>
</feature>
<feature type="helix" evidence="8">
    <location>
        <begin position="215"/>
        <end position="220"/>
    </location>
</feature>
<feature type="helix" evidence="8">
    <location>
        <begin position="223"/>
        <end position="225"/>
    </location>
</feature>
<feature type="strand" evidence="8">
    <location>
        <begin position="229"/>
        <end position="245"/>
    </location>
</feature>
<feature type="helix" evidence="8">
    <location>
        <begin position="246"/>
        <end position="251"/>
    </location>
</feature>
<feature type="helix" evidence="8">
    <location>
        <begin position="254"/>
        <end position="288"/>
    </location>
</feature>
<feature type="strand" evidence="8">
    <location>
        <begin position="293"/>
        <end position="295"/>
    </location>
</feature>
<feature type="turn" evidence="8">
    <location>
        <begin position="298"/>
        <end position="301"/>
    </location>
</feature>
<feature type="helix" evidence="8">
    <location>
        <begin position="302"/>
        <end position="317"/>
    </location>
</feature>
<feature type="helix" evidence="8">
    <location>
        <begin position="321"/>
        <end position="327"/>
    </location>
</feature>
<sequence length="330" mass="36019">MSFFTKTAQLVSGAAVAATLFTATAQAETVLRGASMFDEEHAFTKTLRKFEELVDEKYDGDVTFDLRLNGELGVESDYVTFLNQGVAIDYTILAPSNMAKFAPSIPLMDMPFLFRDLDHWNAVLSSDVLAPLEDELLEKADIKIVGYTGGGTRNLLSKQPVVTFDDLKGHKMRVMGAPIQAQIFQALTAAPSAIAYNEVYNAIQTGVIAGFENEAASIQNLKFYEVAPNLTLTRHSITVRPIVMSGKTFNSLPADLQAVVLEAGEEAGAYGRELESREDGVKLQEMVDAGQLTVSEFENRDKMLEMVKPVQDAYAAEIGASDLLEAVRAK</sequence>
<organism>
    <name type="scientific">Sulfitobacter sp. (strain NAS-14.1)</name>
    <dbReference type="NCBI Taxonomy" id="314267"/>
    <lineage>
        <taxon>Bacteria</taxon>
        <taxon>Pseudomonadati</taxon>
        <taxon>Pseudomonadota</taxon>
        <taxon>Alphaproteobacteria</taxon>
        <taxon>Rhodobacterales</taxon>
        <taxon>Roseobacteraceae</taxon>
        <taxon>Sulfitobacter</taxon>
    </lineage>
</organism>
<reference key="1">
    <citation type="submission" date="2005-12" db="EMBL/GenBank/DDBJ databases">
        <authorList>
            <person name="Moran M.A."/>
            <person name="Ferriera S."/>
            <person name="Johnson J."/>
            <person name="Kravitz S."/>
            <person name="Halpern A."/>
            <person name="Remington K."/>
            <person name="Beeson K."/>
            <person name="Tran B."/>
            <person name="Rogers Y.-H."/>
            <person name="Friedman R."/>
            <person name="Venter J.C."/>
        </authorList>
    </citation>
    <scope>NUCLEOTIDE SEQUENCE [LARGE SCALE GENOMIC DNA]</scope>
    <source>
        <strain>NAS-14.1</strain>
    </source>
</reference>
<reference evidence="6 7" key="2">
    <citation type="journal article" date="2015" name="Biochemistry">
        <title>Experimental strategies for functional annotation and metabolism discovery: targeted screening of solute binding proteins and unbiased panning of metabolomes.</title>
        <authorList>
            <person name="Vetting M.W."/>
            <person name="Al-Obaidi N."/>
            <person name="Zhao S."/>
            <person name="San Francisco B."/>
            <person name="Kim J."/>
            <person name="Wichelecki D.J."/>
            <person name="Bouvier J.T."/>
            <person name="Solbiati J.O."/>
            <person name="Vu H."/>
            <person name="Zhang X."/>
            <person name="Rodionov D.A."/>
            <person name="Love J.D."/>
            <person name="Hillerich B.S."/>
            <person name="Seidel R.D."/>
            <person name="Quinn R.J."/>
            <person name="Osterman A.L."/>
            <person name="Cronan J.E."/>
            <person name="Jacobson M.P."/>
            <person name="Gerlt J.A."/>
            <person name="Almo S.C."/>
        </authorList>
    </citation>
    <scope>X-RAY CRYSTALLOGRAPHY (1.60 ANGSTROMS) OF 28-330 IN COMPLEXES WITH ALPHA-D-MANNURONATE AND ALPHA-D-TALURONATE</scope>
</reference>
<accession>A3T0D1</accession>
<gene>
    <name evidence="5" type="ORF">NAS141_03721</name>
</gene>
<protein>
    <recommendedName>
        <fullName evidence="4">Solute-binding protein NAS141_03721</fullName>
    </recommendedName>
</protein>
<dbReference type="EMBL" id="AALZ01000007">
    <property type="protein sequence ID" value="EAP79685.1"/>
    <property type="molecule type" value="Genomic_DNA"/>
</dbReference>
<dbReference type="RefSeq" id="WP_009824394.1">
    <property type="nucleotide sequence ID" value="NZ_AALZ01000007.1"/>
</dbReference>
<dbReference type="PDB" id="4NX1">
    <property type="method" value="X-ray"/>
    <property type="resolution" value="1.60 A"/>
    <property type="chains" value="A/B=28-330"/>
</dbReference>
<dbReference type="PDB" id="4OVP">
    <property type="method" value="X-ray"/>
    <property type="resolution" value="1.70 A"/>
    <property type="chains" value="A/B=28-330"/>
</dbReference>
<dbReference type="PDBsum" id="4NX1"/>
<dbReference type="PDBsum" id="4OVP"/>
<dbReference type="SMR" id="A3T0D1"/>
<dbReference type="HOGENOM" id="CLU_036176_4_1_5"/>
<dbReference type="EvolutionaryTrace" id="A3T0D1"/>
<dbReference type="GO" id="GO:0030288">
    <property type="term" value="C:outer membrane-bounded periplasmic space"/>
    <property type="evidence" value="ECO:0007669"/>
    <property type="project" value="InterPro"/>
</dbReference>
<dbReference type="GO" id="GO:0055085">
    <property type="term" value="P:transmembrane transport"/>
    <property type="evidence" value="ECO:0007669"/>
    <property type="project" value="InterPro"/>
</dbReference>
<dbReference type="CDD" id="cd13603">
    <property type="entry name" value="PBP2_TRAP_Siap_TeaA_like"/>
    <property type="match status" value="1"/>
</dbReference>
<dbReference type="Gene3D" id="3.40.190.170">
    <property type="entry name" value="Bacterial extracellular solute-binding protein, family 7"/>
    <property type="match status" value="1"/>
</dbReference>
<dbReference type="InterPro" id="IPR018389">
    <property type="entry name" value="DctP_fam"/>
</dbReference>
<dbReference type="InterPro" id="IPR004682">
    <property type="entry name" value="TRAP_DctP"/>
</dbReference>
<dbReference type="InterPro" id="IPR038404">
    <property type="entry name" value="TRAP_DctP_sf"/>
</dbReference>
<dbReference type="NCBIfam" id="NF037995">
    <property type="entry name" value="TRAP_S1"/>
    <property type="match status" value="1"/>
</dbReference>
<dbReference type="PANTHER" id="PTHR33376">
    <property type="match status" value="1"/>
</dbReference>
<dbReference type="PANTHER" id="PTHR33376:SF4">
    <property type="entry name" value="SIALIC ACID-BINDING PERIPLASMIC PROTEIN SIAP"/>
    <property type="match status" value="1"/>
</dbReference>
<dbReference type="Pfam" id="PF03480">
    <property type="entry name" value="DctP"/>
    <property type="match status" value="1"/>
</dbReference>
<dbReference type="PIRSF" id="PIRSF006470">
    <property type="entry name" value="DctB"/>
    <property type="match status" value="1"/>
</dbReference>
<proteinExistence type="evidence at protein level"/>
<name>DCTP_SULSN</name>
<keyword id="KW-0002">3D-structure</keyword>
<keyword id="KW-0574">Periplasm</keyword>
<keyword id="KW-0732">Signal</keyword>
<keyword id="KW-0813">Transport</keyword>